<evidence type="ECO:0000255" key="1">
    <source>
        <dbReference type="HAMAP-Rule" id="MF_00151"/>
    </source>
</evidence>
<evidence type="ECO:0007829" key="2">
    <source>
        <dbReference type="PDB" id="5X6F"/>
    </source>
</evidence>
<comment type="function">
    <text evidence="1">Reversibly transfers an adenylyl group from ATP to 4'-phosphopantetheine, yielding dephospho-CoA (dPCoA) and pyrophosphate.</text>
</comment>
<comment type="catalytic activity">
    <reaction evidence="1">
        <text>(R)-4'-phosphopantetheine + ATP + H(+) = 3'-dephospho-CoA + diphosphate</text>
        <dbReference type="Rhea" id="RHEA:19801"/>
        <dbReference type="ChEBI" id="CHEBI:15378"/>
        <dbReference type="ChEBI" id="CHEBI:30616"/>
        <dbReference type="ChEBI" id="CHEBI:33019"/>
        <dbReference type="ChEBI" id="CHEBI:57328"/>
        <dbReference type="ChEBI" id="CHEBI:61723"/>
        <dbReference type="EC" id="2.7.7.3"/>
    </reaction>
</comment>
<comment type="cofactor">
    <cofactor evidence="1">
        <name>Mg(2+)</name>
        <dbReference type="ChEBI" id="CHEBI:18420"/>
    </cofactor>
</comment>
<comment type="pathway">
    <text evidence="1">Cofactor biosynthesis; coenzyme A biosynthesis; CoA from (R)-pantothenate: step 4/5.</text>
</comment>
<comment type="subunit">
    <text evidence="1">Homohexamer.</text>
</comment>
<comment type="subcellular location">
    <subcellularLocation>
        <location evidence="1">Cytoplasm</location>
    </subcellularLocation>
</comment>
<comment type="similarity">
    <text evidence="1">Belongs to the bacterial CoaD family.</text>
</comment>
<organism>
    <name type="scientific">Pseudomonas aeruginosa (strain ATCC 15692 / DSM 22644 / CIP 104116 / JCM 14847 / LMG 12228 / 1C / PRS 101 / PAO1)</name>
    <dbReference type="NCBI Taxonomy" id="208964"/>
    <lineage>
        <taxon>Bacteria</taxon>
        <taxon>Pseudomonadati</taxon>
        <taxon>Pseudomonadota</taxon>
        <taxon>Gammaproteobacteria</taxon>
        <taxon>Pseudomonadales</taxon>
        <taxon>Pseudomonadaceae</taxon>
        <taxon>Pseudomonas</taxon>
    </lineage>
</organism>
<proteinExistence type="evidence at protein level"/>
<accession>Q9I6D1</accession>
<protein>
    <recommendedName>
        <fullName evidence="1">Phosphopantetheine adenylyltransferase</fullName>
        <ecNumber evidence="1">2.7.7.3</ecNumber>
    </recommendedName>
    <alternativeName>
        <fullName evidence="1">Dephospho-CoA pyrophosphorylase</fullName>
    </alternativeName>
    <alternativeName>
        <fullName evidence="1">Pantetheine-phosphate adenylyltransferase</fullName>
        <shortName evidence="1">PPAT</shortName>
    </alternativeName>
</protein>
<feature type="chain" id="PRO_0000156258" description="Phosphopantetheine adenylyltransferase">
    <location>
        <begin position="1"/>
        <end position="159"/>
    </location>
</feature>
<feature type="binding site" evidence="1">
    <location>
        <begin position="9"/>
        <end position="10"/>
    </location>
    <ligand>
        <name>ATP</name>
        <dbReference type="ChEBI" id="CHEBI:30616"/>
    </ligand>
</feature>
<feature type="binding site" evidence="1">
    <location>
        <position position="9"/>
    </location>
    <ligand>
        <name>substrate</name>
    </ligand>
</feature>
<feature type="binding site" evidence="1">
    <location>
        <position position="17"/>
    </location>
    <ligand>
        <name>ATP</name>
        <dbReference type="ChEBI" id="CHEBI:30616"/>
    </ligand>
</feature>
<feature type="binding site" evidence="1">
    <location>
        <position position="41"/>
    </location>
    <ligand>
        <name>substrate</name>
    </ligand>
</feature>
<feature type="binding site" evidence="1">
    <location>
        <position position="73"/>
    </location>
    <ligand>
        <name>substrate</name>
    </ligand>
</feature>
<feature type="binding site" evidence="1">
    <location>
        <position position="87"/>
    </location>
    <ligand>
        <name>substrate</name>
    </ligand>
</feature>
<feature type="binding site" evidence="1">
    <location>
        <begin position="88"/>
        <end position="90"/>
    </location>
    <ligand>
        <name>ATP</name>
        <dbReference type="ChEBI" id="CHEBI:30616"/>
    </ligand>
</feature>
<feature type="binding site" evidence="1">
    <location>
        <position position="98"/>
    </location>
    <ligand>
        <name>ATP</name>
        <dbReference type="ChEBI" id="CHEBI:30616"/>
    </ligand>
</feature>
<feature type="binding site" evidence="1">
    <location>
        <begin position="123"/>
        <end position="129"/>
    </location>
    <ligand>
        <name>ATP</name>
        <dbReference type="ChEBI" id="CHEBI:30616"/>
    </ligand>
</feature>
<feature type="site" description="Transition state stabilizer" evidence="1">
    <location>
        <position position="17"/>
    </location>
</feature>
<feature type="strand" evidence="2">
    <location>
        <begin position="3"/>
        <end position="8"/>
    </location>
</feature>
<feature type="helix" evidence="2">
    <location>
        <begin position="15"/>
        <end position="27"/>
    </location>
</feature>
<feature type="strand" evidence="2">
    <location>
        <begin position="28"/>
        <end position="36"/>
    </location>
</feature>
<feature type="helix" evidence="2">
    <location>
        <begin position="39"/>
        <end position="41"/>
    </location>
</feature>
<feature type="helix" evidence="2">
    <location>
        <begin position="47"/>
        <end position="57"/>
    </location>
</feature>
<feature type="turn" evidence="2">
    <location>
        <begin position="58"/>
        <end position="60"/>
    </location>
</feature>
<feature type="strand" evidence="2">
    <location>
        <begin position="64"/>
        <end position="69"/>
    </location>
</feature>
<feature type="helix" evidence="2">
    <location>
        <begin position="73"/>
        <end position="79"/>
    </location>
</feature>
<feature type="strand" evidence="2">
    <location>
        <begin position="84"/>
        <end position="88"/>
    </location>
</feature>
<feature type="strand" evidence="2">
    <location>
        <begin position="91"/>
        <end position="93"/>
    </location>
</feature>
<feature type="helix" evidence="2">
    <location>
        <begin position="95"/>
        <end position="108"/>
    </location>
</feature>
<feature type="strand" evidence="2">
    <location>
        <begin position="112"/>
        <end position="117"/>
    </location>
</feature>
<feature type="turn" evidence="2">
    <location>
        <begin position="121"/>
        <end position="123"/>
    </location>
</feature>
<feature type="helix" evidence="2">
    <location>
        <begin position="128"/>
        <end position="136"/>
    </location>
</feature>
<feature type="turn" evidence="2">
    <location>
        <begin position="142"/>
        <end position="144"/>
    </location>
</feature>
<feature type="helix" evidence="2">
    <location>
        <begin position="147"/>
        <end position="156"/>
    </location>
</feature>
<keyword id="KW-0002">3D-structure</keyword>
<keyword id="KW-0067">ATP-binding</keyword>
<keyword id="KW-0173">Coenzyme A biosynthesis</keyword>
<keyword id="KW-0963">Cytoplasm</keyword>
<keyword id="KW-0460">Magnesium</keyword>
<keyword id="KW-0547">Nucleotide-binding</keyword>
<keyword id="KW-0548">Nucleotidyltransferase</keyword>
<keyword id="KW-1185">Reference proteome</keyword>
<keyword id="KW-0808">Transferase</keyword>
<gene>
    <name evidence="1" type="primary">coaD</name>
    <name type="ordered locus">PA0363</name>
</gene>
<reference key="1">
    <citation type="journal article" date="2000" name="Nature">
        <title>Complete genome sequence of Pseudomonas aeruginosa PAO1, an opportunistic pathogen.</title>
        <authorList>
            <person name="Stover C.K."/>
            <person name="Pham X.-Q.T."/>
            <person name="Erwin A.L."/>
            <person name="Mizoguchi S.D."/>
            <person name="Warrener P."/>
            <person name="Hickey M.J."/>
            <person name="Brinkman F.S.L."/>
            <person name="Hufnagle W.O."/>
            <person name="Kowalik D.J."/>
            <person name="Lagrou M."/>
            <person name="Garber R.L."/>
            <person name="Goltry L."/>
            <person name="Tolentino E."/>
            <person name="Westbrock-Wadman S."/>
            <person name="Yuan Y."/>
            <person name="Brody L.L."/>
            <person name="Coulter S.N."/>
            <person name="Folger K.R."/>
            <person name="Kas A."/>
            <person name="Larbig K."/>
            <person name="Lim R.M."/>
            <person name="Smith K.A."/>
            <person name="Spencer D.H."/>
            <person name="Wong G.K.-S."/>
            <person name="Wu Z."/>
            <person name="Paulsen I.T."/>
            <person name="Reizer J."/>
            <person name="Saier M.H. Jr."/>
            <person name="Hancock R.E.W."/>
            <person name="Lory S."/>
            <person name="Olson M.V."/>
        </authorList>
    </citation>
    <scope>NUCLEOTIDE SEQUENCE [LARGE SCALE GENOMIC DNA]</scope>
    <source>
        <strain>ATCC 15692 / DSM 22644 / CIP 104116 / JCM 14847 / LMG 12228 / 1C / PRS 101 / PAO1</strain>
    </source>
</reference>
<dbReference type="EC" id="2.7.7.3" evidence="1"/>
<dbReference type="EMBL" id="AE004091">
    <property type="protein sequence ID" value="AAG03752.1"/>
    <property type="molecule type" value="Genomic_DNA"/>
</dbReference>
<dbReference type="PIR" id="A83600">
    <property type="entry name" value="A83600"/>
</dbReference>
<dbReference type="RefSeq" id="NP_249054.1">
    <property type="nucleotide sequence ID" value="NC_002516.2"/>
</dbReference>
<dbReference type="RefSeq" id="WP_003084466.1">
    <property type="nucleotide sequence ID" value="NZ_QZGE01000016.1"/>
</dbReference>
<dbReference type="PDB" id="5X6F">
    <property type="method" value="X-ray"/>
    <property type="resolution" value="2.59 A"/>
    <property type="chains" value="A/B/C/D/E/F=1-159"/>
</dbReference>
<dbReference type="PDBsum" id="5X6F"/>
<dbReference type="SMR" id="Q9I6D1"/>
<dbReference type="FunCoup" id="Q9I6D1">
    <property type="interactions" value="566"/>
</dbReference>
<dbReference type="STRING" id="208964.PA0363"/>
<dbReference type="PaxDb" id="208964-PA0363"/>
<dbReference type="GeneID" id="77218883"/>
<dbReference type="GeneID" id="879847"/>
<dbReference type="KEGG" id="pae:PA0363"/>
<dbReference type="PATRIC" id="fig|208964.12.peg.382"/>
<dbReference type="PseudoCAP" id="PA0363"/>
<dbReference type="HOGENOM" id="CLU_100149_0_1_6"/>
<dbReference type="InParanoid" id="Q9I6D1"/>
<dbReference type="OrthoDB" id="9806661at2"/>
<dbReference type="PhylomeDB" id="Q9I6D1"/>
<dbReference type="BioCyc" id="PAER208964:G1FZ6-366-MONOMER"/>
<dbReference type="BRENDA" id="2.7.7.3">
    <property type="organism ID" value="5087"/>
</dbReference>
<dbReference type="UniPathway" id="UPA00241">
    <property type="reaction ID" value="UER00355"/>
</dbReference>
<dbReference type="Proteomes" id="UP000002438">
    <property type="component" value="Chromosome"/>
</dbReference>
<dbReference type="GO" id="GO:0005737">
    <property type="term" value="C:cytoplasm"/>
    <property type="evidence" value="ECO:0007669"/>
    <property type="project" value="UniProtKB-SubCell"/>
</dbReference>
<dbReference type="GO" id="GO:0008771">
    <property type="term" value="F:[citrate (pro-3S)-lyase] ligase activity"/>
    <property type="evidence" value="ECO:0007669"/>
    <property type="project" value="InterPro"/>
</dbReference>
<dbReference type="GO" id="GO:0005524">
    <property type="term" value="F:ATP binding"/>
    <property type="evidence" value="ECO:0007669"/>
    <property type="project" value="UniProtKB-KW"/>
</dbReference>
<dbReference type="GO" id="GO:0004595">
    <property type="term" value="F:pantetheine-phosphate adenylyltransferase activity"/>
    <property type="evidence" value="ECO:0000318"/>
    <property type="project" value="GO_Central"/>
</dbReference>
<dbReference type="GO" id="GO:0015937">
    <property type="term" value="P:coenzyme A biosynthetic process"/>
    <property type="evidence" value="ECO:0000318"/>
    <property type="project" value="GO_Central"/>
</dbReference>
<dbReference type="CDD" id="cd02163">
    <property type="entry name" value="PPAT"/>
    <property type="match status" value="1"/>
</dbReference>
<dbReference type="Gene3D" id="3.40.50.620">
    <property type="entry name" value="HUPs"/>
    <property type="match status" value="1"/>
</dbReference>
<dbReference type="HAMAP" id="MF_00151">
    <property type="entry name" value="PPAT_bact"/>
    <property type="match status" value="1"/>
</dbReference>
<dbReference type="InterPro" id="IPR013166">
    <property type="entry name" value="Citrate_lyase_ligase_C"/>
</dbReference>
<dbReference type="InterPro" id="IPR004821">
    <property type="entry name" value="Cyt_trans-like"/>
</dbReference>
<dbReference type="InterPro" id="IPR001980">
    <property type="entry name" value="PPAT"/>
</dbReference>
<dbReference type="InterPro" id="IPR014729">
    <property type="entry name" value="Rossmann-like_a/b/a_fold"/>
</dbReference>
<dbReference type="NCBIfam" id="TIGR01510">
    <property type="entry name" value="coaD_prev_kdtB"/>
    <property type="match status" value="1"/>
</dbReference>
<dbReference type="NCBIfam" id="TIGR00125">
    <property type="entry name" value="cyt_tran_rel"/>
    <property type="match status" value="1"/>
</dbReference>
<dbReference type="PANTHER" id="PTHR21342">
    <property type="entry name" value="PHOSPHOPANTETHEINE ADENYLYLTRANSFERASE"/>
    <property type="match status" value="1"/>
</dbReference>
<dbReference type="PANTHER" id="PTHR21342:SF1">
    <property type="entry name" value="PHOSPHOPANTETHEINE ADENYLYLTRANSFERASE"/>
    <property type="match status" value="1"/>
</dbReference>
<dbReference type="Pfam" id="PF01467">
    <property type="entry name" value="CTP_transf_like"/>
    <property type="match status" value="1"/>
</dbReference>
<dbReference type="PRINTS" id="PR01020">
    <property type="entry name" value="LPSBIOSNTHSS"/>
</dbReference>
<dbReference type="SMART" id="SM00764">
    <property type="entry name" value="Citrate_ly_lig"/>
    <property type="match status" value="1"/>
</dbReference>
<dbReference type="SUPFAM" id="SSF52374">
    <property type="entry name" value="Nucleotidylyl transferase"/>
    <property type="match status" value="1"/>
</dbReference>
<name>COAD_PSEAE</name>
<sequence>MNRVLYPGTFDPITKGHGDLIERASRLFDHVIIAVAASPKKNPLFSLEQRVALAQEVTKHLPNVEVVGFSTLLAHFVKEQKANVFLRGLRAVSDFEYEFQLANMNRQLAPDVESMFLTPSEKYSFISSTLVREIAALGGDISKFVHPAVADALAERFKR</sequence>